<accession>B7N8W7</accession>
<comment type="function">
    <text evidence="1">Catalyzes the formation of 6,7-dimethyl-8-ribityllumazine by condensation of 5-amino-6-(D-ribitylamino)uracil with 3,4-dihydroxy-2-butanone 4-phosphate. This is the penultimate step in the biosynthesis of riboflavin.</text>
</comment>
<comment type="catalytic activity">
    <reaction evidence="1">
        <text>(2S)-2-hydroxy-3-oxobutyl phosphate + 5-amino-6-(D-ribitylamino)uracil = 6,7-dimethyl-8-(1-D-ribityl)lumazine + phosphate + 2 H2O + H(+)</text>
        <dbReference type="Rhea" id="RHEA:26152"/>
        <dbReference type="ChEBI" id="CHEBI:15377"/>
        <dbReference type="ChEBI" id="CHEBI:15378"/>
        <dbReference type="ChEBI" id="CHEBI:15934"/>
        <dbReference type="ChEBI" id="CHEBI:43474"/>
        <dbReference type="ChEBI" id="CHEBI:58201"/>
        <dbReference type="ChEBI" id="CHEBI:58830"/>
        <dbReference type="EC" id="2.5.1.78"/>
    </reaction>
</comment>
<comment type="pathway">
    <text evidence="1">Cofactor biosynthesis; riboflavin biosynthesis; riboflavin from 2-hydroxy-3-oxobutyl phosphate and 5-amino-6-(D-ribitylamino)uracil: step 1/2.</text>
</comment>
<comment type="subunit">
    <text evidence="1">Forms an icosahedral capsid composed of 60 subunits, arranged as a dodecamer of pentamers.</text>
</comment>
<comment type="similarity">
    <text evidence="1">Belongs to the DMRL synthase family.</text>
</comment>
<feature type="chain" id="PRO_1000195485" description="6,7-dimethyl-8-ribityllumazine synthase">
    <location>
        <begin position="1"/>
        <end position="156"/>
    </location>
</feature>
<feature type="active site" description="Proton donor" evidence="1">
    <location>
        <position position="89"/>
    </location>
</feature>
<feature type="binding site" evidence="1">
    <location>
        <position position="22"/>
    </location>
    <ligand>
        <name>5-amino-6-(D-ribitylamino)uracil</name>
        <dbReference type="ChEBI" id="CHEBI:15934"/>
    </ligand>
</feature>
<feature type="binding site" evidence="1">
    <location>
        <begin position="57"/>
        <end position="59"/>
    </location>
    <ligand>
        <name>5-amino-6-(D-ribitylamino)uracil</name>
        <dbReference type="ChEBI" id="CHEBI:15934"/>
    </ligand>
</feature>
<feature type="binding site" evidence="1">
    <location>
        <begin position="81"/>
        <end position="83"/>
    </location>
    <ligand>
        <name>5-amino-6-(D-ribitylamino)uracil</name>
        <dbReference type="ChEBI" id="CHEBI:15934"/>
    </ligand>
</feature>
<feature type="binding site" evidence="1">
    <location>
        <begin position="86"/>
        <end position="87"/>
    </location>
    <ligand>
        <name>(2S)-2-hydroxy-3-oxobutyl phosphate</name>
        <dbReference type="ChEBI" id="CHEBI:58830"/>
    </ligand>
</feature>
<feature type="binding site" evidence="1">
    <location>
        <position position="114"/>
    </location>
    <ligand>
        <name>5-amino-6-(D-ribitylamino)uracil</name>
        <dbReference type="ChEBI" id="CHEBI:15934"/>
    </ligand>
</feature>
<feature type="binding site" evidence="1">
    <location>
        <position position="128"/>
    </location>
    <ligand>
        <name>(2S)-2-hydroxy-3-oxobutyl phosphate</name>
        <dbReference type="ChEBI" id="CHEBI:58830"/>
    </ligand>
</feature>
<reference key="1">
    <citation type="journal article" date="2009" name="PLoS Genet.">
        <title>Organised genome dynamics in the Escherichia coli species results in highly diverse adaptive paths.</title>
        <authorList>
            <person name="Touchon M."/>
            <person name="Hoede C."/>
            <person name="Tenaillon O."/>
            <person name="Barbe V."/>
            <person name="Baeriswyl S."/>
            <person name="Bidet P."/>
            <person name="Bingen E."/>
            <person name="Bonacorsi S."/>
            <person name="Bouchier C."/>
            <person name="Bouvet O."/>
            <person name="Calteau A."/>
            <person name="Chiapello H."/>
            <person name="Clermont O."/>
            <person name="Cruveiller S."/>
            <person name="Danchin A."/>
            <person name="Diard M."/>
            <person name="Dossat C."/>
            <person name="Karoui M.E."/>
            <person name="Frapy E."/>
            <person name="Garry L."/>
            <person name="Ghigo J.M."/>
            <person name="Gilles A.M."/>
            <person name="Johnson J."/>
            <person name="Le Bouguenec C."/>
            <person name="Lescat M."/>
            <person name="Mangenot S."/>
            <person name="Martinez-Jehanne V."/>
            <person name="Matic I."/>
            <person name="Nassif X."/>
            <person name="Oztas S."/>
            <person name="Petit M.A."/>
            <person name="Pichon C."/>
            <person name="Rouy Z."/>
            <person name="Ruf C.S."/>
            <person name="Schneider D."/>
            <person name="Tourret J."/>
            <person name="Vacherie B."/>
            <person name="Vallenet D."/>
            <person name="Medigue C."/>
            <person name="Rocha E.P.C."/>
            <person name="Denamur E."/>
        </authorList>
    </citation>
    <scope>NUCLEOTIDE SEQUENCE [LARGE SCALE GENOMIC DNA]</scope>
    <source>
        <strain>UMN026 / ExPEC</strain>
    </source>
</reference>
<sequence>MNIIEANVATPDARVAITIARFNNFINDSLLEGAIDALKRIGQVKDENITVVWVPGAYELPLAAGALAKTGKYDAVIALGTVIRGGTAHFEYVAGGASNGLAHVAQDSEIPVAFGVLTTESIEQAIERAGTKAGNKGAEAALTALEMINVLKAIKA</sequence>
<gene>
    <name evidence="1" type="primary">ribH</name>
    <name type="ordered locus">ECUMN_0453</name>
</gene>
<protein>
    <recommendedName>
        <fullName evidence="1">6,7-dimethyl-8-ribityllumazine synthase</fullName>
        <shortName evidence="1">DMRL synthase</shortName>
        <shortName evidence="1">LS</shortName>
        <shortName evidence="1">Lumazine synthase</shortName>
        <ecNumber evidence="1">2.5.1.78</ecNumber>
    </recommendedName>
</protein>
<dbReference type="EC" id="2.5.1.78" evidence="1"/>
<dbReference type="EMBL" id="CU928163">
    <property type="protein sequence ID" value="CAR11668.1"/>
    <property type="molecule type" value="Genomic_DNA"/>
</dbReference>
<dbReference type="RefSeq" id="YP_002411216.1">
    <property type="nucleotide sequence ID" value="NC_011751.1"/>
</dbReference>
<dbReference type="SMR" id="B7N8W7"/>
<dbReference type="STRING" id="585056.ECUMN_0453"/>
<dbReference type="KEGG" id="eum:ECUMN_0453"/>
<dbReference type="PATRIC" id="fig|585056.7.peg.656"/>
<dbReference type="HOGENOM" id="CLU_089358_1_1_6"/>
<dbReference type="UniPathway" id="UPA00275">
    <property type="reaction ID" value="UER00404"/>
</dbReference>
<dbReference type="Proteomes" id="UP000007097">
    <property type="component" value="Chromosome"/>
</dbReference>
<dbReference type="GO" id="GO:0005829">
    <property type="term" value="C:cytosol"/>
    <property type="evidence" value="ECO:0007669"/>
    <property type="project" value="TreeGrafter"/>
</dbReference>
<dbReference type="GO" id="GO:0009349">
    <property type="term" value="C:riboflavin synthase complex"/>
    <property type="evidence" value="ECO:0007669"/>
    <property type="project" value="InterPro"/>
</dbReference>
<dbReference type="GO" id="GO:0000906">
    <property type="term" value="F:6,7-dimethyl-8-ribityllumazine synthase activity"/>
    <property type="evidence" value="ECO:0007669"/>
    <property type="project" value="UniProtKB-UniRule"/>
</dbReference>
<dbReference type="GO" id="GO:0009231">
    <property type="term" value="P:riboflavin biosynthetic process"/>
    <property type="evidence" value="ECO:0007669"/>
    <property type="project" value="UniProtKB-UniRule"/>
</dbReference>
<dbReference type="CDD" id="cd09209">
    <property type="entry name" value="Lumazine_synthase-I"/>
    <property type="match status" value="1"/>
</dbReference>
<dbReference type="FunFam" id="3.40.50.960:FF:000001">
    <property type="entry name" value="6,7-dimethyl-8-ribityllumazine synthase"/>
    <property type="match status" value="1"/>
</dbReference>
<dbReference type="Gene3D" id="3.40.50.960">
    <property type="entry name" value="Lumazine/riboflavin synthase"/>
    <property type="match status" value="1"/>
</dbReference>
<dbReference type="HAMAP" id="MF_00178">
    <property type="entry name" value="Lumazine_synth"/>
    <property type="match status" value="1"/>
</dbReference>
<dbReference type="InterPro" id="IPR034964">
    <property type="entry name" value="LS"/>
</dbReference>
<dbReference type="InterPro" id="IPR002180">
    <property type="entry name" value="LS/RS"/>
</dbReference>
<dbReference type="InterPro" id="IPR036467">
    <property type="entry name" value="LS/RS_sf"/>
</dbReference>
<dbReference type="NCBIfam" id="TIGR00114">
    <property type="entry name" value="lumazine-synth"/>
    <property type="match status" value="1"/>
</dbReference>
<dbReference type="NCBIfam" id="NF000812">
    <property type="entry name" value="PRK00061.1-4"/>
    <property type="match status" value="1"/>
</dbReference>
<dbReference type="PANTHER" id="PTHR21058:SF0">
    <property type="entry name" value="6,7-DIMETHYL-8-RIBITYLLUMAZINE SYNTHASE"/>
    <property type="match status" value="1"/>
</dbReference>
<dbReference type="PANTHER" id="PTHR21058">
    <property type="entry name" value="6,7-DIMETHYL-8-RIBITYLLUMAZINE SYNTHASE DMRL SYNTHASE LUMAZINE SYNTHASE"/>
    <property type="match status" value="1"/>
</dbReference>
<dbReference type="Pfam" id="PF00885">
    <property type="entry name" value="DMRL_synthase"/>
    <property type="match status" value="1"/>
</dbReference>
<dbReference type="SUPFAM" id="SSF52121">
    <property type="entry name" value="Lumazine synthase"/>
    <property type="match status" value="1"/>
</dbReference>
<proteinExistence type="inferred from homology"/>
<name>RISB_ECOLU</name>
<evidence type="ECO:0000255" key="1">
    <source>
        <dbReference type="HAMAP-Rule" id="MF_00178"/>
    </source>
</evidence>
<organism>
    <name type="scientific">Escherichia coli O17:K52:H18 (strain UMN026 / ExPEC)</name>
    <dbReference type="NCBI Taxonomy" id="585056"/>
    <lineage>
        <taxon>Bacteria</taxon>
        <taxon>Pseudomonadati</taxon>
        <taxon>Pseudomonadota</taxon>
        <taxon>Gammaproteobacteria</taxon>
        <taxon>Enterobacterales</taxon>
        <taxon>Enterobacteriaceae</taxon>
        <taxon>Escherichia</taxon>
    </lineage>
</organism>
<keyword id="KW-0686">Riboflavin biosynthesis</keyword>
<keyword id="KW-0808">Transferase</keyword>